<feature type="signal peptide" evidence="1">
    <location>
        <begin position="1"/>
        <end position="36"/>
    </location>
</feature>
<feature type="chain" id="PRO_0000009274" description="Chaperone protein FimC">
    <location>
        <begin position="37"/>
        <end position="241"/>
    </location>
</feature>
<name>FIMC_ECOL6</name>
<gene>
    <name type="primary">fimC</name>
    <name type="ordered locus">c5395</name>
</gene>
<protein>
    <recommendedName>
        <fullName>Chaperone protein FimC</fullName>
    </recommendedName>
</protein>
<organism>
    <name type="scientific">Escherichia coli O6:H1 (strain CFT073 / ATCC 700928 / UPEC)</name>
    <dbReference type="NCBI Taxonomy" id="199310"/>
    <lineage>
        <taxon>Bacteria</taxon>
        <taxon>Pseudomonadati</taxon>
        <taxon>Pseudomonadota</taxon>
        <taxon>Gammaproteobacteria</taxon>
        <taxon>Enterobacterales</taxon>
        <taxon>Enterobacteriaceae</taxon>
        <taxon>Escherichia</taxon>
    </lineage>
</organism>
<evidence type="ECO:0000250" key="1"/>
<evidence type="ECO:0000305" key="2"/>
<reference key="1">
    <citation type="journal article" date="2002" name="Proc. Natl. Acad. Sci. U.S.A.">
        <title>Extensive mosaic structure revealed by the complete genome sequence of uropathogenic Escherichia coli.</title>
        <authorList>
            <person name="Welch R.A."/>
            <person name="Burland V."/>
            <person name="Plunkett G. III"/>
            <person name="Redford P."/>
            <person name="Roesch P."/>
            <person name="Rasko D."/>
            <person name="Buckles E.L."/>
            <person name="Liou S.-R."/>
            <person name="Boutin A."/>
            <person name="Hackett J."/>
            <person name="Stroud D."/>
            <person name="Mayhew G.F."/>
            <person name="Rose D.J."/>
            <person name="Zhou S."/>
            <person name="Schwartz D.C."/>
            <person name="Perna N.T."/>
            <person name="Mobley H.L.T."/>
            <person name="Donnenberg M.S."/>
            <person name="Blattner F.R."/>
        </authorList>
    </citation>
    <scope>NUCLEOTIDE SEQUENCE [LARGE SCALE GENOMIC DNA]</scope>
    <source>
        <strain>CFT073 / ATCC 700928 / UPEC</strain>
    </source>
</reference>
<proteinExistence type="inferred from homology"/>
<accession>P59590</accession>
<sequence>MSNKNVNVRKSQEITFCLLAGILMFMAMVVAGRAEAGVALGATRVIYPAGQKQVQLAVTNNDENSTYLIQSWVENADGVKDGRFIVTPPLFAMKGKKENTLRILDATNNQLPQDRESLFWMNVKAIPSMDKSKLTENTLQLAIISRIKLYYRPAKLALPPDQAAEKLRFRRSANSLTLINPTPYYLTVTELNAGTRVLENALVPPMGESAVKLPSDAGSNITYRTINDYGALTPKMTGVME</sequence>
<dbReference type="EMBL" id="AE014075">
    <property type="protein sequence ID" value="AAN83817.1"/>
    <property type="molecule type" value="Genomic_DNA"/>
</dbReference>
<dbReference type="RefSeq" id="WP_000066579.1">
    <property type="nucleotide sequence ID" value="NZ_CP051263.1"/>
</dbReference>
<dbReference type="BMRB" id="P59590"/>
<dbReference type="SMR" id="P59590"/>
<dbReference type="STRING" id="199310.c5395"/>
<dbReference type="KEGG" id="ecc:c5395"/>
<dbReference type="eggNOG" id="COG3121">
    <property type="taxonomic scope" value="Bacteria"/>
</dbReference>
<dbReference type="HOGENOM" id="CLU_070768_2_1_6"/>
<dbReference type="BioCyc" id="ECOL199310:C5395-MONOMER"/>
<dbReference type="Proteomes" id="UP000001410">
    <property type="component" value="Chromosome"/>
</dbReference>
<dbReference type="GO" id="GO:0030288">
    <property type="term" value="C:outer membrane-bounded periplasmic space"/>
    <property type="evidence" value="ECO:0007669"/>
    <property type="project" value="InterPro"/>
</dbReference>
<dbReference type="GO" id="GO:0071555">
    <property type="term" value="P:cell wall organization"/>
    <property type="evidence" value="ECO:0007669"/>
    <property type="project" value="InterPro"/>
</dbReference>
<dbReference type="GO" id="GO:0061077">
    <property type="term" value="P:chaperone-mediated protein folding"/>
    <property type="evidence" value="ECO:0007669"/>
    <property type="project" value="InterPro"/>
</dbReference>
<dbReference type="FunFam" id="2.60.40.10:FF:000458">
    <property type="entry name" value="Molecular chaperone FimC"/>
    <property type="match status" value="1"/>
</dbReference>
<dbReference type="Gene3D" id="2.60.40.10">
    <property type="entry name" value="Immunoglobulins"/>
    <property type="match status" value="2"/>
</dbReference>
<dbReference type="InterPro" id="IPR013783">
    <property type="entry name" value="Ig-like_fold"/>
</dbReference>
<dbReference type="InterPro" id="IPR008962">
    <property type="entry name" value="PapD-like_sf"/>
</dbReference>
<dbReference type="InterPro" id="IPR050643">
    <property type="entry name" value="Periplasmic_pilus_chap"/>
</dbReference>
<dbReference type="InterPro" id="IPR036316">
    <property type="entry name" value="Pili_assmbl_chap_C_dom_sf"/>
</dbReference>
<dbReference type="InterPro" id="IPR001829">
    <property type="entry name" value="Pili_assmbl_chaperone_bac"/>
</dbReference>
<dbReference type="InterPro" id="IPR016148">
    <property type="entry name" value="Pili_assmbl_chaperone_C"/>
</dbReference>
<dbReference type="InterPro" id="IPR018046">
    <property type="entry name" value="Pili_assmbl_chaperone_CS"/>
</dbReference>
<dbReference type="InterPro" id="IPR016147">
    <property type="entry name" value="Pili_assmbl_chaperone_N"/>
</dbReference>
<dbReference type="PANTHER" id="PTHR30251:SF11">
    <property type="entry name" value="CHAPERONE PROTEIN FIMC-RELATED"/>
    <property type="match status" value="1"/>
</dbReference>
<dbReference type="PANTHER" id="PTHR30251">
    <property type="entry name" value="PILUS ASSEMBLY CHAPERONE"/>
    <property type="match status" value="1"/>
</dbReference>
<dbReference type="Pfam" id="PF02753">
    <property type="entry name" value="PapD_C"/>
    <property type="match status" value="1"/>
</dbReference>
<dbReference type="Pfam" id="PF00345">
    <property type="entry name" value="PapD_N"/>
    <property type="match status" value="1"/>
</dbReference>
<dbReference type="PRINTS" id="PR00969">
    <property type="entry name" value="CHAPERONPILI"/>
</dbReference>
<dbReference type="SUPFAM" id="SSF49354">
    <property type="entry name" value="PapD-like"/>
    <property type="match status" value="1"/>
</dbReference>
<dbReference type="SUPFAM" id="SSF49584">
    <property type="entry name" value="Periplasmic chaperone C-domain"/>
    <property type="match status" value="1"/>
</dbReference>
<dbReference type="PROSITE" id="PS00635">
    <property type="entry name" value="PILI_CHAPERONE"/>
    <property type="match status" value="1"/>
</dbReference>
<keyword id="KW-0143">Chaperone</keyword>
<keyword id="KW-1029">Fimbrium biogenesis</keyword>
<keyword id="KW-0393">Immunoglobulin domain</keyword>
<keyword id="KW-0574">Periplasm</keyword>
<keyword id="KW-1185">Reference proteome</keyword>
<keyword id="KW-0732">Signal</keyword>
<comment type="function">
    <text evidence="1">Required for the biogenesis of type 1 fimbriae. Binds and interact with FimH (By similarity).</text>
</comment>
<comment type="subcellular location">
    <subcellularLocation>
        <location evidence="1">Periplasm</location>
    </subcellularLocation>
</comment>
<comment type="similarity">
    <text evidence="2">Belongs to the periplasmic pilus chaperone family.</text>
</comment>